<sequence length="252" mass="28359">MDKRLWVGVVSIFPEMFRAISDYGITSRAVKQGLLTLTCWNPRDYTEDRHQTVDDRPFGGGPGMVMKIKPLEGALADARQAAGGRKAKVIYLSPQGRQLTQAGVRELAEEEALILIAGRYEGIDERFIEEHVDEEWSIGDYVLSGGELPAMVLVDAVTRLLPGALGHADSAEEDSFTDGLLDCPHYTRPEVYADKRVPEVLLSGNHEHIRRWRLQQALGRTWERRADLLDSRSLSGEEQKLLAEYIRQRDDS</sequence>
<accession>B7UYK8</accession>
<name>TRMD_PSEA8</name>
<reference key="1">
    <citation type="journal article" date="2009" name="Genome Res.">
        <title>Newly introduced genomic prophage islands are critical determinants of in vivo competitiveness in the Liverpool epidemic strain of Pseudomonas aeruginosa.</title>
        <authorList>
            <person name="Winstanley C."/>
            <person name="Langille M.G.I."/>
            <person name="Fothergill J.L."/>
            <person name="Kukavica-Ibrulj I."/>
            <person name="Paradis-Bleau C."/>
            <person name="Sanschagrin F."/>
            <person name="Thomson N.R."/>
            <person name="Winsor G.L."/>
            <person name="Quail M.A."/>
            <person name="Lennard N."/>
            <person name="Bignell A."/>
            <person name="Clarke L."/>
            <person name="Seeger K."/>
            <person name="Saunders D."/>
            <person name="Harris D."/>
            <person name="Parkhill J."/>
            <person name="Hancock R.E.W."/>
            <person name="Brinkman F.S.L."/>
            <person name="Levesque R.C."/>
        </authorList>
    </citation>
    <scope>NUCLEOTIDE SEQUENCE [LARGE SCALE GENOMIC DNA]</scope>
    <source>
        <strain>LESB58</strain>
    </source>
</reference>
<dbReference type="EC" id="2.1.1.228" evidence="1"/>
<dbReference type="EMBL" id="FM209186">
    <property type="protein sequence ID" value="CAW25964.1"/>
    <property type="molecule type" value="Genomic_DNA"/>
</dbReference>
<dbReference type="RefSeq" id="WP_003119312.1">
    <property type="nucleotide sequence ID" value="NC_011770.1"/>
</dbReference>
<dbReference type="SMR" id="B7UYK8"/>
<dbReference type="GeneID" id="77219763"/>
<dbReference type="KEGG" id="pag:PLES_12371"/>
<dbReference type="HOGENOM" id="CLU_047363_0_1_6"/>
<dbReference type="GO" id="GO:0005829">
    <property type="term" value="C:cytosol"/>
    <property type="evidence" value="ECO:0007669"/>
    <property type="project" value="TreeGrafter"/>
</dbReference>
<dbReference type="GO" id="GO:0052906">
    <property type="term" value="F:tRNA (guanine(37)-N1)-methyltransferase activity"/>
    <property type="evidence" value="ECO:0007669"/>
    <property type="project" value="UniProtKB-UniRule"/>
</dbReference>
<dbReference type="GO" id="GO:0002939">
    <property type="term" value="P:tRNA N1-guanine methylation"/>
    <property type="evidence" value="ECO:0007669"/>
    <property type="project" value="TreeGrafter"/>
</dbReference>
<dbReference type="CDD" id="cd18080">
    <property type="entry name" value="TrmD-like"/>
    <property type="match status" value="1"/>
</dbReference>
<dbReference type="FunFam" id="1.10.1270.20:FF:000001">
    <property type="entry name" value="tRNA (guanine-N(1)-)-methyltransferase"/>
    <property type="match status" value="1"/>
</dbReference>
<dbReference type="FunFam" id="3.40.1280.10:FF:000001">
    <property type="entry name" value="tRNA (guanine-N(1)-)-methyltransferase"/>
    <property type="match status" value="1"/>
</dbReference>
<dbReference type="Gene3D" id="3.40.1280.10">
    <property type="match status" value="1"/>
</dbReference>
<dbReference type="Gene3D" id="1.10.1270.20">
    <property type="entry name" value="tRNA(m1g37)methyltransferase, domain 2"/>
    <property type="match status" value="1"/>
</dbReference>
<dbReference type="HAMAP" id="MF_00605">
    <property type="entry name" value="TrmD"/>
    <property type="match status" value="1"/>
</dbReference>
<dbReference type="InterPro" id="IPR029028">
    <property type="entry name" value="Alpha/beta_knot_MTases"/>
</dbReference>
<dbReference type="InterPro" id="IPR023148">
    <property type="entry name" value="tRNA_m1G_MeTrfase_C_sf"/>
</dbReference>
<dbReference type="InterPro" id="IPR002649">
    <property type="entry name" value="tRNA_m1G_MeTrfase_TrmD"/>
</dbReference>
<dbReference type="InterPro" id="IPR029026">
    <property type="entry name" value="tRNA_m1G_MTases_N"/>
</dbReference>
<dbReference type="InterPro" id="IPR016009">
    <property type="entry name" value="tRNA_MeTrfase_TRMD/TRM10"/>
</dbReference>
<dbReference type="NCBIfam" id="NF000648">
    <property type="entry name" value="PRK00026.1"/>
    <property type="match status" value="1"/>
</dbReference>
<dbReference type="NCBIfam" id="TIGR00088">
    <property type="entry name" value="trmD"/>
    <property type="match status" value="1"/>
</dbReference>
<dbReference type="PANTHER" id="PTHR46417">
    <property type="entry name" value="TRNA (GUANINE-N(1)-)-METHYLTRANSFERASE"/>
    <property type="match status" value="1"/>
</dbReference>
<dbReference type="PANTHER" id="PTHR46417:SF1">
    <property type="entry name" value="TRNA (GUANINE-N(1)-)-METHYLTRANSFERASE"/>
    <property type="match status" value="1"/>
</dbReference>
<dbReference type="Pfam" id="PF01746">
    <property type="entry name" value="tRNA_m1G_MT"/>
    <property type="match status" value="1"/>
</dbReference>
<dbReference type="PIRSF" id="PIRSF000386">
    <property type="entry name" value="tRNA_mtase"/>
    <property type="match status" value="1"/>
</dbReference>
<dbReference type="SUPFAM" id="SSF75217">
    <property type="entry name" value="alpha/beta knot"/>
    <property type="match status" value="1"/>
</dbReference>
<protein>
    <recommendedName>
        <fullName evidence="1">tRNA (guanine-N(1)-)-methyltransferase</fullName>
        <ecNumber evidence="1">2.1.1.228</ecNumber>
    </recommendedName>
    <alternativeName>
        <fullName evidence="1">M1G-methyltransferase</fullName>
    </alternativeName>
    <alternativeName>
        <fullName evidence="1">tRNA [GM37] methyltransferase</fullName>
    </alternativeName>
</protein>
<feature type="chain" id="PRO_1000130197" description="tRNA (guanine-N(1)-)-methyltransferase">
    <location>
        <begin position="1"/>
        <end position="252"/>
    </location>
</feature>
<feature type="binding site" evidence="1">
    <location>
        <position position="118"/>
    </location>
    <ligand>
        <name>S-adenosyl-L-methionine</name>
        <dbReference type="ChEBI" id="CHEBI:59789"/>
    </ligand>
</feature>
<feature type="binding site" evidence="1">
    <location>
        <begin position="138"/>
        <end position="143"/>
    </location>
    <ligand>
        <name>S-adenosyl-L-methionine</name>
        <dbReference type="ChEBI" id="CHEBI:59789"/>
    </ligand>
</feature>
<gene>
    <name evidence="1" type="primary">trmD</name>
    <name type="ordered locus">PLES_12371</name>
</gene>
<organism>
    <name type="scientific">Pseudomonas aeruginosa (strain LESB58)</name>
    <dbReference type="NCBI Taxonomy" id="557722"/>
    <lineage>
        <taxon>Bacteria</taxon>
        <taxon>Pseudomonadati</taxon>
        <taxon>Pseudomonadota</taxon>
        <taxon>Gammaproteobacteria</taxon>
        <taxon>Pseudomonadales</taxon>
        <taxon>Pseudomonadaceae</taxon>
        <taxon>Pseudomonas</taxon>
    </lineage>
</organism>
<comment type="function">
    <text evidence="1">Specifically methylates guanosine-37 in various tRNAs.</text>
</comment>
<comment type="catalytic activity">
    <reaction evidence="1">
        <text>guanosine(37) in tRNA + S-adenosyl-L-methionine = N(1)-methylguanosine(37) in tRNA + S-adenosyl-L-homocysteine + H(+)</text>
        <dbReference type="Rhea" id="RHEA:36899"/>
        <dbReference type="Rhea" id="RHEA-COMP:10145"/>
        <dbReference type="Rhea" id="RHEA-COMP:10147"/>
        <dbReference type="ChEBI" id="CHEBI:15378"/>
        <dbReference type="ChEBI" id="CHEBI:57856"/>
        <dbReference type="ChEBI" id="CHEBI:59789"/>
        <dbReference type="ChEBI" id="CHEBI:73542"/>
        <dbReference type="ChEBI" id="CHEBI:74269"/>
        <dbReference type="EC" id="2.1.1.228"/>
    </reaction>
</comment>
<comment type="subunit">
    <text evidence="1">Homodimer.</text>
</comment>
<comment type="subcellular location">
    <subcellularLocation>
        <location evidence="1">Cytoplasm</location>
    </subcellularLocation>
</comment>
<comment type="similarity">
    <text evidence="1">Belongs to the RNA methyltransferase TrmD family.</text>
</comment>
<proteinExistence type="inferred from homology"/>
<keyword id="KW-0963">Cytoplasm</keyword>
<keyword id="KW-0489">Methyltransferase</keyword>
<keyword id="KW-0949">S-adenosyl-L-methionine</keyword>
<keyword id="KW-0808">Transferase</keyword>
<keyword id="KW-0819">tRNA processing</keyword>
<evidence type="ECO:0000255" key="1">
    <source>
        <dbReference type="HAMAP-Rule" id="MF_00605"/>
    </source>
</evidence>